<sequence length="184" mass="20247">MWPPDAEPEPDPESAHGPRSGRTVPGLRALLPARAFLCSLKGRLLLAESGLSFITFICYVVSSASAFLTVPLLEFLLAVYFLFADAMQLNDKWQGLCWPMMDFLRCVTAALIYFVISITAVAKYSDGAYKAAGVFGFFATIVFAIDFYLIFNEVAKFLKQGDSGNETTAHRTEEENSNSDSDSD</sequence>
<dbReference type="EMBL" id="AY241870">
    <property type="protein sequence ID" value="AAP33492.1"/>
    <property type="molecule type" value="mRNA"/>
</dbReference>
<dbReference type="EMBL" id="AK003882">
    <property type="protein sequence ID" value="BAB23056.1"/>
    <property type="status" value="ALT_FRAME"/>
    <property type="molecule type" value="mRNA"/>
</dbReference>
<dbReference type="EMBL" id="AK079165">
    <property type="protein sequence ID" value="BAC37565.1"/>
    <property type="molecule type" value="mRNA"/>
</dbReference>
<dbReference type="EMBL" id="BC003230">
    <property type="protein sequence ID" value="AAH03230.1"/>
    <property type="molecule type" value="mRNA"/>
</dbReference>
<dbReference type="EMBL" id="BC145817">
    <property type="protein sequence ID" value="AAI45818.1"/>
    <property type="molecule type" value="mRNA"/>
</dbReference>
<dbReference type="EMBL" id="BC145819">
    <property type="protein sequence ID" value="AAI45820.1"/>
    <property type="molecule type" value="mRNA"/>
</dbReference>
<dbReference type="CCDS" id="CCDS22577.1"/>
<dbReference type="RefSeq" id="NP_077179.1">
    <property type="nucleotide sequence ID" value="NM_024217.3"/>
</dbReference>
<dbReference type="RefSeq" id="XP_006531389.1">
    <property type="nucleotide sequence ID" value="XM_006531326.2"/>
</dbReference>
<dbReference type="RefSeq" id="XP_006531390.1">
    <property type="nucleotide sequence ID" value="XM_006531327.4"/>
</dbReference>
<dbReference type="RefSeq" id="XP_006531391.1">
    <property type="nucleotide sequence ID" value="XM_006531328.2"/>
</dbReference>
<dbReference type="RefSeq" id="XP_006531392.1">
    <property type="nucleotide sequence ID" value="XM_006531329.3"/>
</dbReference>
<dbReference type="RefSeq" id="XP_030099600.1">
    <property type="nucleotide sequence ID" value="XM_030243740.2"/>
</dbReference>
<dbReference type="RefSeq" id="XP_030099601.1">
    <property type="nucleotide sequence ID" value="XM_030243741.1"/>
</dbReference>
<dbReference type="RefSeq" id="XP_030099602.1">
    <property type="nucleotide sequence ID" value="XM_030243742.1"/>
</dbReference>
<dbReference type="RefSeq" id="XP_030099603.1">
    <property type="nucleotide sequence ID" value="XM_030243743.2"/>
</dbReference>
<dbReference type="RefSeq" id="XP_036010150.1">
    <property type="nucleotide sequence ID" value="XM_036154257.1"/>
</dbReference>
<dbReference type="SMR" id="Q99LJ5"/>
<dbReference type="BioGRID" id="212666">
    <property type="interactions" value="3"/>
</dbReference>
<dbReference type="CORUM" id="Q99LJ5"/>
<dbReference type="FunCoup" id="Q99LJ5">
    <property type="interactions" value="782"/>
</dbReference>
<dbReference type="STRING" id="10090.ENSMUSP00000034343"/>
<dbReference type="iPTMnet" id="Q99LJ5"/>
<dbReference type="PhosphoSitePlus" id="Q99LJ5"/>
<dbReference type="SwissPalm" id="Q99LJ5"/>
<dbReference type="PaxDb" id="10090-ENSMUSP00000034343"/>
<dbReference type="ProteomicsDB" id="281631"/>
<dbReference type="Pumba" id="Q99LJ5"/>
<dbReference type="Antibodypedia" id="2892">
    <property type="antibodies" value="139 antibodies from 22 providers"/>
</dbReference>
<dbReference type="DNASU" id="68119"/>
<dbReference type="Ensembl" id="ENSMUST00000034343.5">
    <property type="protein sequence ID" value="ENSMUSP00000034343.5"/>
    <property type="gene ID" value="ENSMUSG00000031875.8"/>
</dbReference>
<dbReference type="Ensembl" id="ENSMUST00000212081.2">
    <property type="protein sequence ID" value="ENSMUSP00000148682.2"/>
    <property type="gene ID" value="ENSMUSG00000031875.8"/>
</dbReference>
<dbReference type="GeneID" id="68119"/>
<dbReference type="KEGG" id="mmu:68119"/>
<dbReference type="UCSC" id="uc009nam.1">
    <property type="organism name" value="mouse"/>
</dbReference>
<dbReference type="AGR" id="MGI:2447162"/>
<dbReference type="CTD" id="123920"/>
<dbReference type="MGI" id="MGI:2447162">
    <property type="gene designation" value="Cmtm3"/>
</dbReference>
<dbReference type="VEuPathDB" id="HostDB:ENSMUSG00000031875"/>
<dbReference type="eggNOG" id="KOG4788">
    <property type="taxonomic scope" value="Eukaryota"/>
</dbReference>
<dbReference type="GeneTree" id="ENSGT00940000160432"/>
<dbReference type="HOGENOM" id="CLU_108546_1_0_1"/>
<dbReference type="InParanoid" id="Q99LJ5"/>
<dbReference type="OMA" id="AAPFMMV"/>
<dbReference type="OrthoDB" id="9943862at2759"/>
<dbReference type="PhylomeDB" id="Q99LJ5"/>
<dbReference type="TreeFam" id="TF317387"/>
<dbReference type="BioGRID-ORCS" id="68119">
    <property type="hits" value="4 hits in 76 CRISPR screens"/>
</dbReference>
<dbReference type="PRO" id="PR:Q99LJ5"/>
<dbReference type="Proteomes" id="UP000000589">
    <property type="component" value="Chromosome 8"/>
</dbReference>
<dbReference type="RNAct" id="Q99LJ5">
    <property type="molecule type" value="protein"/>
</dbReference>
<dbReference type="Bgee" id="ENSMUSG00000031875">
    <property type="expression patterns" value="Expressed in decidua and 246 other cell types or tissues"/>
</dbReference>
<dbReference type="ExpressionAtlas" id="Q99LJ5">
    <property type="expression patterns" value="baseline and differential"/>
</dbReference>
<dbReference type="GO" id="GO:0005737">
    <property type="term" value="C:cytoplasm"/>
    <property type="evidence" value="ECO:0000314"/>
    <property type="project" value="MGI"/>
</dbReference>
<dbReference type="GO" id="GO:0031410">
    <property type="term" value="C:cytoplasmic vesicle"/>
    <property type="evidence" value="ECO:0007669"/>
    <property type="project" value="Ensembl"/>
</dbReference>
<dbReference type="GO" id="GO:0005829">
    <property type="term" value="C:cytosol"/>
    <property type="evidence" value="ECO:0007669"/>
    <property type="project" value="Ensembl"/>
</dbReference>
<dbReference type="GO" id="GO:0005615">
    <property type="term" value="C:extracellular space"/>
    <property type="evidence" value="ECO:0007669"/>
    <property type="project" value="UniProtKB-KW"/>
</dbReference>
<dbReference type="GO" id="GO:0031965">
    <property type="term" value="C:nuclear membrane"/>
    <property type="evidence" value="ECO:0000314"/>
    <property type="project" value="MGI"/>
</dbReference>
<dbReference type="GO" id="GO:0005125">
    <property type="term" value="F:cytokine activity"/>
    <property type="evidence" value="ECO:0007669"/>
    <property type="project" value="UniProtKB-KW"/>
</dbReference>
<dbReference type="GO" id="GO:0001835">
    <property type="term" value="P:blastocyst hatching"/>
    <property type="evidence" value="ECO:0000315"/>
    <property type="project" value="MGI"/>
</dbReference>
<dbReference type="GO" id="GO:0006935">
    <property type="term" value="P:chemotaxis"/>
    <property type="evidence" value="ECO:0007669"/>
    <property type="project" value="UniProtKB-KW"/>
</dbReference>
<dbReference type="GO" id="GO:0050861">
    <property type="term" value="P:positive regulation of B cell receptor signaling pathway"/>
    <property type="evidence" value="ECO:0000314"/>
    <property type="project" value="MGI"/>
</dbReference>
<dbReference type="InterPro" id="IPR008253">
    <property type="entry name" value="Marvel"/>
</dbReference>
<dbReference type="InterPro" id="IPR050578">
    <property type="entry name" value="MARVEL-CKLF_proteins"/>
</dbReference>
<dbReference type="PANTHER" id="PTHR22776:SF3">
    <property type="entry name" value="CKLF-LIKE MARVEL TRANSMEMBRANE DOMAIN-CONTAINING PROTEIN 3"/>
    <property type="match status" value="1"/>
</dbReference>
<dbReference type="PANTHER" id="PTHR22776">
    <property type="entry name" value="MARVEL-CONTAINING POTENTIAL LIPID RAFT-ASSOCIATED PROTEIN"/>
    <property type="match status" value="1"/>
</dbReference>
<dbReference type="Pfam" id="PF01284">
    <property type="entry name" value="MARVEL"/>
    <property type="match status" value="1"/>
</dbReference>
<dbReference type="PROSITE" id="PS51225">
    <property type="entry name" value="MARVEL"/>
    <property type="match status" value="1"/>
</dbReference>
<organism>
    <name type="scientific">Mus musculus</name>
    <name type="common">Mouse</name>
    <dbReference type="NCBI Taxonomy" id="10090"/>
    <lineage>
        <taxon>Eukaryota</taxon>
        <taxon>Metazoa</taxon>
        <taxon>Chordata</taxon>
        <taxon>Craniata</taxon>
        <taxon>Vertebrata</taxon>
        <taxon>Euteleostomi</taxon>
        <taxon>Mammalia</taxon>
        <taxon>Eutheria</taxon>
        <taxon>Euarchontoglires</taxon>
        <taxon>Glires</taxon>
        <taxon>Rodentia</taxon>
        <taxon>Myomorpha</taxon>
        <taxon>Muroidea</taxon>
        <taxon>Muridae</taxon>
        <taxon>Murinae</taxon>
        <taxon>Mus</taxon>
        <taxon>Mus</taxon>
    </lineage>
</organism>
<proteinExistence type="evidence at transcript level"/>
<accession>Q99LJ5</accession>
<accession>A6H6B5</accession>
<accession>Q8BJU1</accession>
<accession>Q9D165</accession>
<evidence type="ECO:0000255" key="1"/>
<evidence type="ECO:0000255" key="2">
    <source>
        <dbReference type="PROSITE-ProRule" id="PRU00581"/>
    </source>
</evidence>
<evidence type="ECO:0000256" key="3">
    <source>
        <dbReference type="SAM" id="MobiDB-lite"/>
    </source>
</evidence>
<evidence type="ECO:0000305" key="4"/>
<keyword id="KW-0145">Chemotaxis</keyword>
<keyword id="KW-0202">Cytokine</keyword>
<keyword id="KW-0472">Membrane</keyword>
<keyword id="KW-1185">Reference proteome</keyword>
<keyword id="KW-0812">Transmembrane</keyword>
<keyword id="KW-1133">Transmembrane helix</keyword>
<feature type="chain" id="PRO_0000186102" description="CKLF-like MARVEL transmembrane domain-containing protein 3">
    <location>
        <begin position="1"/>
        <end position="184"/>
    </location>
</feature>
<feature type="transmembrane region" description="Helical" evidence="1">
    <location>
        <begin position="64"/>
        <end position="84"/>
    </location>
</feature>
<feature type="transmembrane region" description="Helical" evidence="1">
    <location>
        <begin position="96"/>
        <end position="116"/>
    </location>
</feature>
<feature type="transmembrane region" description="Helical" evidence="1">
    <location>
        <begin position="131"/>
        <end position="151"/>
    </location>
</feature>
<feature type="domain" description="MARVEL" evidence="2">
    <location>
        <begin position="36"/>
        <end position="155"/>
    </location>
</feature>
<feature type="region of interest" description="Disordered" evidence="3">
    <location>
        <begin position="1"/>
        <end position="22"/>
    </location>
</feature>
<feature type="region of interest" description="Disordered" evidence="3">
    <location>
        <begin position="163"/>
        <end position="184"/>
    </location>
</feature>
<feature type="compositionally biased region" description="Acidic residues" evidence="3">
    <location>
        <begin position="1"/>
        <end position="12"/>
    </location>
</feature>
<feature type="compositionally biased region" description="Acidic residues" evidence="3">
    <location>
        <begin position="175"/>
        <end position="184"/>
    </location>
</feature>
<feature type="sequence conflict" description="In Ref. 2; BAC37565." evidence="4" ref="2">
    <original>D</original>
    <variation>G</variation>
    <location>
        <position position="146"/>
    </location>
</feature>
<name>CKLF3_MOUSE</name>
<gene>
    <name type="primary">Cmtm3</name>
    <name type="synonym">Cklfsf3</name>
</gene>
<protein>
    <recommendedName>
        <fullName>CKLF-like MARVEL transmembrane domain-containing protein 3</fullName>
    </recommendedName>
    <alternativeName>
        <fullName>Chemokine-like factor superfamily member 3</fullName>
    </alternativeName>
</protein>
<comment type="subcellular location">
    <subcellularLocation>
        <location>Membrane</location>
        <topology>Multi-pass membrane protein</topology>
    </subcellularLocation>
</comment>
<comment type="similarity">
    <text evidence="4">Belongs to the chemokine-like factor family.</text>
</comment>
<comment type="sequence caution" evidence="4">
    <conflict type="frameshift">
        <sequence resource="EMBL-CDS" id="BAB23056"/>
    </conflict>
</comment>
<reference key="1">
    <citation type="submission" date="2003-02" db="EMBL/GenBank/DDBJ databases">
        <authorList>
            <person name="Han W."/>
            <person name="Li T."/>
            <person name="Tan Y."/>
            <person name="Shi S."/>
            <person name="Ding P."/>
            <person name="Ma D."/>
        </authorList>
    </citation>
    <scope>NUCLEOTIDE SEQUENCE [MRNA]</scope>
    <source>
        <tissue>Placenta</tissue>
    </source>
</reference>
<reference key="2">
    <citation type="journal article" date="2005" name="Science">
        <title>The transcriptional landscape of the mammalian genome.</title>
        <authorList>
            <person name="Carninci P."/>
            <person name="Kasukawa T."/>
            <person name="Katayama S."/>
            <person name="Gough J."/>
            <person name="Frith M.C."/>
            <person name="Maeda N."/>
            <person name="Oyama R."/>
            <person name="Ravasi T."/>
            <person name="Lenhard B."/>
            <person name="Wells C."/>
            <person name="Kodzius R."/>
            <person name="Shimokawa K."/>
            <person name="Bajic V.B."/>
            <person name="Brenner S.E."/>
            <person name="Batalov S."/>
            <person name="Forrest A.R."/>
            <person name="Zavolan M."/>
            <person name="Davis M.J."/>
            <person name="Wilming L.G."/>
            <person name="Aidinis V."/>
            <person name="Allen J.E."/>
            <person name="Ambesi-Impiombato A."/>
            <person name="Apweiler R."/>
            <person name="Aturaliya R.N."/>
            <person name="Bailey T.L."/>
            <person name="Bansal M."/>
            <person name="Baxter L."/>
            <person name="Beisel K.W."/>
            <person name="Bersano T."/>
            <person name="Bono H."/>
            <person name="Chalk A.M."/>
            <person name="Chiu K.P."/>
            <person name="Choudhary V."/>
            <person name="Christoffels A."/>
            <person name="Clutterbuck D.R."/>
            <person name="Crowe M.L."/>
            <person name="Dalla E."/>
            <person name="Dalrymple B.P."/>
            <person name="de Bono B."/>
            <person name="Della Gatta G."/>
            <person name="di Bernardo D."/>
            <person name="Down T."/>
            <person name="Engstrom P."/>
            <person name="Fagiolini M."/>
            <person name="Faulkner G."/>
            <person name="Fletcher C.F."/>
            <person name="Fukushima T."/>
            <person name="Furuno M."/>
            <person name="Futaki S."/>
            <person name="Gariboldi M."/>
            <person name="Georgii-Hemming P."/>
            <person name="Gingeras T.R."/>
            <person name="Gojobori T."/>
            <person name="Green R.E."/>
            <person name="Gustincich S."/>
            <person name="Harbers M."/>
            <person name="Hayashi Y."/>
            <person name="Hensch T.K."/>
            <person name="Hirokawa N."/>
            <person name="Hill D."/>
            <person name="Huminiecki L."/>
            <person name="Iacono M."/>
            <person name="Ikeo K."/>
            <person name="Iwama A."/>
            <person name="Ishikawa T."/>
            <person name="Jakt M."/>
            <person name="Kanapin A."/>
            <person name="Katoh M."/>
            <person name="Kawasawa Y."/>
            <person name="Kelso J."/>
            <person name="Kitamura H."/>
            <person name="Kitano H."/>
            <person name="Kollias G."/>
            <person name="Krishnan S.P."/>
            <person name="Kruger A."/>
            <person name="Kummerfeld S.K."/>
            <person name="Kurochkin I.V."/>
            <person name="Lareau L.F."/>
            <person name="Lazarevic D."/>
            <person name="Lipovich L."/>
            <person name="Liu J."/>
            <person name="Liuni S."/>
            <person name="McWilliam S."/>
            <person name="Madan Babu M."/>
            <person name="Madera M."/>
            <person name="Marchionni L."/>
            <person name="Matsuda H."/>
            <person name="Matsuzawa S."/>
            <person name="Miki H."/>
            <person name="Mignone F."/>
            <person name="Miyake S."/>
            <person name="Morris K."/>
            <person name="Mottagui-Tabar S."/>
            <person name="Mulder N."/>
            <person name="Nakano N."/>
            <person name="Nakauchi H."/>
            <person name="Ng P."/>
            <person name="Nilsson R."/>
            <person name="Nishiguchi S."/>
            <person name="Nishikawa S."/>
            <person name="Nori F."/>
            <person name="Ohara O."/>
            <person name="Okazaki Y."/>
            <person name="Orlando V."/>
            <person name="Pang K.C."/>
            <person name="Pavan W.J."/>
            <person name="Pavesi G."/>
            <person name="Pesole G."/>
            <person name="Petrovsky N."/>
            <person name="Piazza S."/>
            <person name="Reed J."/>
            <person name="Reid J.F."/>
            <person name="Ring B.Z."/>
            <person name="Ringwald M."/>
            <person name="Rost B."/>
            <person name="Ruan Y."/>
            <person name="Salzberg S.L."/>
            <person name="Sandelin A."/>
            <person name="Schneider C."/>
            <person name="Schoenbach C."/>
            <person name="Sekiguchi K."/>
            <person name="Semple C.A."/>
            <person name="Seno S."/>
            <person name="Sessa L."/>
            <person name="Sheng Y."/>
            <person name="Shibata Y."/>
            <person name="Shimada H."/>
            <person name="Shimada K."/>
            <person name="Silva D."/>
            <person name="Sinclair B."/>
            <person name="Sperling S."/>
            <person name="Stupka E."/>
            <person name="Sugiura K."/>
            <person name="Sultana R."/>
            <person name="Takenaka Y."/>
            <person name="Taki K."/>
            <person name="Tammoja K."/>
            <person name="Tan S.L."/>
            <person name="Tang S."/>
            <person name="Taylor M.S."/>
            <person name="Tegner J."/>
            <person name="Teichmann S.A."/>
            <person name="Ueda H.R."/>
            <person name="van Nimwegen E."/>
            <person name="Verardo R."/>
            <person name="Wei C.L."/>
            <person name="Yagi K."/>
            <person name="Yamanishi H."/>
            <person name="Zabarovsky E."/>
            <person name="Zhu S."/>
            <person name="Zimmer A."/>
            <person name="Hide W."/>
            <person name="Bult C."/>
            <person name="Grimmond S.M."/>
            <person name="Teasdale R.D."/>
            <person name="Liu E.T."/>
            <person name="Brusic V."/>
            <person name="Quackenbush J."/>
            <person name="Wahlestedt C."/>
            <person name="Mattick J.S."/>
            <person name="Hume D.A."/>
            <person name="Kai C."/>
            <person name="Sasaki D."/>
            <person name="Tomaru Y."/>
            <person name="Fukuda S."/>
            <person name="Kanamori-Katayama M."/>
            <person name="Suzuki M."/>
            <person name="Aoki J."/>
            <person name="Arakawa T."/>
            <person name="Iida J."/>
            <person name="Imamura K."/>
            <person name="Itoh M."/>
            <person name="Kato T."/>
            <person name="Kawaji H."/>
            <person name="Kawagashira N."/>
            <person name="Kawashima T."/>
            <person name="Kojima M."/>
            <person name="Kondo S."/>
            <person name="Konno H."/>
            <person name="Nakano K."/>
            <person name="Ninomiya N."/>
            <person name="Nishio T."/>
            <person name="Okada M."/>
            <person name="Plessy C."/>
            <person name="Shibata K."/>
            <person name="Shiraki T."/>
            <person name="Suzuki S."/>
            <person name="Tagami M."/>
            <person name="Waki K."/>
            <person name="Watahiki A."/>
            <person name="Okamura-Oho Y."/>
            <person name="Suzuki H."/>
            <person name="Kawai J."/>
            <person name="Hayashizaki Y."/>
        </authorList>
    </citation>
    <scope>NUCLEOTIDE SEQUENCE [LARGE SCALE MRNA]</scope>
    <source>
        <strain>C57BL/6J</strain>
        <tissue>Embryo</tissue>
    </source>
</reference>
<reference key="3">
    <citation type="journal article" date="2004" name="Genome Res.">
        <title>The status, quality, and expansion of the NIH full-length cDNA project: the Mammalian Gene Collection (MGC).</title>
        <authorList>
            <consortium name="The MGC Project Team"/>
        </authorList>
    </citation>
    <scope>NUCLEOTIDE SEQUENCE [LARGE SCALE MRNA]</scope>
    <source>
        <tissue>Brain</tissue>
        <tissue>Mammary gland</tissue>
    </source>
</reference>